<proteinExistence type="evidence at protein level"/>
<protein>
    <recommendedName>
        <fullName>14-3-3-like protein GF14 phi</fullName>
    </recommendedName>
    <alternativeName>
        <fullName>General regulatory factor 4</fullName>
    </alternativeName>
</protein>
<dbReference type="EMBL" id="L09111">
    <property type="protein sequence ID" value="AAB06231.1"/>
    <property type="molecule type" value="mRNA"/>
</dbReference>
<dbReference type="EMBL" id="AF001414">
    <property type="protein sequence ID" value="AAB62224.1"/>
    <property type="molecule type" value="Genomic_DNA"/>
</dbReference>
<dbReference type="EMBL" id="AC079605">
    <property type="protein sequence ID" value="AAG50610.1"/>
    <property type="molecule type" value="Genomic_DNA"/>
</dbReference>
<dbReference type="EMBL" id="CP002684">
    <property type="protein sequence ID" value="AEE31760.1"/>
    <property type="molecule type" value="Genomic_DNA"/>
</dbReference>
<dbReference type="EMBL" id="AY084342">
    <property type="protein sequence ID" value="AAM60925.1"/>
    <property type="molecule type" value="mRNA"/>
</dbReference>
<dbReference type="PIR" id="C86472">
    <property type="entry name" value="C86472"/>
</dbReference>
<dbReference type="RefSeq" id="NP_564453.1">
    <molecule id="P46077-1"/>
    <property type="nucleotide sequence ID" value="NM_103213.3"/>
</dbReference>
<dbReference type="SMR" id="P46077"/>
<dbReference type="BioGRID" id="25635">
    <property type="interactions" value="26"/>
</dbReference>
<dbReference type="FunCoup" id="P46077">
    <property type="interactions" value="3603"/>
</dbReference>
<dbReference type="IntAct" id="P46077">
    <property type="interactions" value="8"/>
</dbReference>
<dbReference type="MINT" id="P46077"/>
<dbReference type="STRING" id="3702.P46077"/>
<dbReference type="iPTMnet" id="P46077"/>
<dbReference type="PaxDb" id="3702-AT1G35160.2"/>
<dbReference type="ProteomicsDB" id="244516">
    <molecule id="P46077-1"/>
</dbReference>
<dbReference type="EnsemblPlants" id="AT1G35160.1">
    <molecule id="P46077-1"/>
    <property type="protein sequence ID" value="AT1G35160.1"/>
    <property type="gene ID" value="AT1G35160"/>
</dbReference>
<dbReference type="GeneID" id="840403"/>
<dbReference type="Gramene" id="AT1G35160.1">
    <molecule id="P46077-1"/>
    <property type="protein sequence ID" value="AT1G35160.1"/>
    <property type="gene ID" value="AT1G35160"/>
</dbReference>
<dbReference type="KEGG" id="ath:AT1G35160"/>
<dbReference type="Araport" id="AT1G35160"/>
<dbReference type="TAIR" id="AT1G35160">
    <property type="gene designation" value="GF14 PHI"/>
</dbReference>
<dbReference type="eggNOG" id="KOG0841">
    <property type="taxonomic scope" value="Eukaryota"/>
</dbReference>
<dbReference type="HOGENOM" id="CLU_058290_0_0_1"/>
<dbReference type="InParanoid" id="P46077"/>
<dbReference type="OMA" id="AVCMKEV"/>
<dbReference type="OrthoDB" id="10260625at2759"/>
<dbReference type="PhylomeDB" id="P46077"/>
<dbReference type="PRO" id="PR:P46077"/>
<dbReference type="Proteomes" id="UP000006548">
    <property type="component" value="Chromosome 1"/>
</dbReference>
<dbReference type="ExpressionAtlas" id="P46077">
    <property type="expression patterns" value="baseline and differential"/>
</dbReference>
<dbReference type="GO" id="GO:0005737">
    <property type="term" value="C:cytoplasm"/>
    <property type="evidence" value="ECO:0007669"/>
    <property type="project" value="UniProtKB-SubCell"/>
</dbReference>
<dbReference type="GO" id="GO:0005634">
    <property type="term" value="C:nucleus"/>
    <property type="evidence" value="ECO:0007669"/>
    <property type="project" value="UniProtKB-SubCell"/>
</dbReference>
<dbReference type="FunFam" id="1.20.190.20:FF:000002">
    <property type="entry name" value="14-3-3 protein epsilon"/>
    <property type="match status" value="1"/>
</dbReference>
<dbReference type="Gene3D" id="1.20.190.20">
    <property type="entry name" value="14-3-3 domain"/>
    <property type="match status" value="1"/>
</dbReference>
<dbReference type="InterPro" id="IPR000308">
    <property type="entry name" value="14-3-3"/>
</dbReference>
<dbReference type="InterPro" id="IPR023409">
    <property type="entry name" value="14-3-3_CS"/>
</dbReference>
<dbReference type="InterPro" id="IPR036815">
    <property type="entry name" value="14-3-3_dom_sf"/>
</dbReference>
<dbReference type="InterPro" id="IPR023410">
    <property type="entry name" value="14-3-3_domain"/>
</dbReference>
<dbReference type="PANTHER" id="PTHR18860">
    <property type="entry name" value="14-3-3 PROTEIN"/>
    <property type="match status" value="1"/>
</dbReference>
<dbReference type="Pfam" id="PF00244">
    <property type="entry name" value="14-3-3"/>
    <property type="match status" value="1"/>
</dbReference>
<dbReference type="PIRSF" id="PIRSF000868">
    <property type="entry name" value="14-3-3"/>
    <property type="match status" value="1"/>
</dbReference>
<dbReference type="PRINTS" id="PR00305">
    <property type="entry name" value="1433ZETA"/>
</dbReference>
<dbReference type="SMART" id="SM00101">
    <property type="entry name" value="14_3_3"/>
    <property type="match status" value="1"/>
</dbReference>
<dbReference type="SUPFAM" id="SSF48445">
    <property type="entry name" value="14-3-3 protein"/>
    <property type="match status" value="1"/>
</dbReference>
<dbReference type="PROSITE" id="PS00796">
    <property type="entry name" value="1433_1"/>
    <property type="match status" value="1"/>
</dbReference>
<dbReference type="PROSITE" id="PS00797">
    <property type="entry name" value="1433_2"/>
    <property type="match status" value="1"/>
</dbReference>
<gene>
    <name type="primary">GRF4</name>
    <name type="ordered locus">At1g35160</name>
    <name type="ORF">T32G9.30</name>
</gene>
<evidence type="ECO:0000250" key="1">
    <source>
        <dbReference type="UniProtKB" id="P48349"/>
    </source>
</evidence>
<evidence type="ECO:0000256" key="2">
    <source>
        <dbReference type="SAM" id="MobiDB-lite"/>
    </source>
</evidence>
<evidence type="ECO:0000269" key="3">
    <source>
    </source>
</evidence>
<evidence type="ECO:0000269" key="4">
    <source>
    </source>
</evidence>
<evidence type="ECO:0000305" key="5"/>
<evidence type="ECO:0007744" key="6">
    <source>
    </source>
</evidence>
<evidence type="ECO:0007744" key="7">
    <source>
    </source>
</evidence>
<evidence type="ECO:0007744" key="8">
    <source>
    </source>
</evidence>
<feature type="initiator methionine" description="Removed" evidence="8">
    <location>
        <position position="1"/>
    </location>
</feature>
<feature type="chain" id="PRO_0000058666" description="14-3-3-like protein GF14 phi">
    <location>
        <begin position="2"/>
        <end position="267"/>
    </location>
</feature>
<feature type="region of interest" description="Disordered" evidence="2">
    <location>
        <begin position="244"/>
        <end position="267"/>
    </location>
</feature>
<feature type="compositionally biased region" description="Basic and acidic residues" evidence="2">
    <location>
        <begin position="250"/>
        <end position="267"/>
    </location>
</feature>
<feature type="modified residue" description="N-acetylalanine" evidence="8">
    <location>
        <position position="2"/>
    </location>
</feature>
<feature type="modified residue" description="Phosphoserine" evidence="1">
    <location>
        <position position="73"/>
    </location>
</feature>
<feature type="modified residue" description="Phosphoserine" evidence="1">
    <location>
        <position position="196"/>
    </location>
</feature>
<feature type="modified residue" description="Phosphothreonine" evidence="1">
    <location>
        <position position="217"/>
    </location>
</feature>
<feature type="modified residue" description="Phosphoserine" evidence="6 7">
    <location>
        <position position="248"/>
    </location>
</feature>
<reference key="1">
    <citation type="journal article" date="1994" name="Plant Physiol.">
        <title>Five cDNAs encoding Arabidopsis GF14 proteins.</title>
        <authorList>
            <person name="Lu G."/>
            <person name="Rooney M.F."/>
            <person name="Wu K."/>
            <person name="Ferl R.J."/>
        </authorList>
    </citation>
    <scope>NUCLEOTIDE SEQUENCE [MRNA]</scope>
    <source>
        <strain>cv. Columbia</strain>
    </source>
</reference>
<reference key="2">
    <citation type="submission" date="1996-08" db="EMBL/GenBank/DDBJ databases">
        <authorList>
            <person name="Ferl R.J."/>
        </authorList>
    </citation>
    <scope>SEQUENCE REVISION TO 23 AND 245</scope>
</reference>
<reference key="3">
    <citation type="journal article" date="1997" name="Plant Physiol.">
        <title>The Arabidopsis 14-3-3 multigene family.</title>
        <authorList>
            <person name="Wu K."/>
            <person name="Rooney M.F."/>
            <person name="Ferl R.J."/>
        </authorList>
    </citation>
    <scope>NUCLEOTIDE SEQUENCE [GENOMIC DNA]</scope>
</reference>
<reference key="4">
    <citation type="journal article" date="2000" name="Nature">
        <title>Sequence and analysis of chromosome 1 of the plant Arabidopsis thaliana.</title>
        <authorList>
            <person name="Theologis A."/>
            <person name="Ecker J.R."/>
            <person name="Palm C.J."/>
            <person name="Federspiel N.A."/>
            <person name="Kaul S."/>
            <person name="White O."/>
            <person name="Alonso J."/>
            <person name="Altafi H."/>
            <person name="Araujo R."/>
            <person name="Bowman C.L."/>
            <person name="Brooks S.Y."/>
            <person name="Buehler E."/>
            <person name="Chan A."/>
            <person name="Chao Q."/>
            <person name="Chen H."/>
            <person name="Cheuk R.F."/>
            <person name="Chin C.W."/>
            <person name="Chung M.K."/>
            <person name="Conn L."/>
            <person name="Conway A.B."/>
            <person name="Conway A.R."/>
            <person name="Creasy T.H."/>
            <person name="Dewar K."/>
            <person name="Dunn P."/>
            <person name="Etgu P."/>
            <person name="Feldblyum T.V."/>
            <person name="Feng J.-D."/>
            <person name="Fong B."/>
            <person name="Fujii C.Y."/>
            <person name="Gill J.E."/>
            <person name="Goldsmith A.D."/>
            <person name="Haas B."/>
            <person name="Hansen N.F."/>
            <person name="Hughes B."/>
            <person name="Huizar L."/>
            <person name="Hunter J.L."/>
            <person name="Jenkins J."/>
            <person name="Johnson-Hopson C."/>
            <person name="Khan S."/>
            <person name="Khaykin E."/>
            <person name="Kim C.J."/>
            <person name="Koo H.L."/>
            <person name="Kremenetskaia I."/>
            <person name="Kurtz D.B."/>
            <person name="Kwan A."/>
            <person name="Lam B."/>
            <person name="Langin-Hooper S."/>
            <person name="Lee A."/>
            <person name="Lee J.M."/>
            <person name="Lenz C.A."/>
            <person name="Li J.H."/>
            <person name="Li Y.-P."/>
            <person name="Lin X."/>
            <person name="Liu S.X."/>
            <person name="Liu Z.A."/>
            <person name="Luros J.S."/>
            <person name="Maiti R."/>
            <person name="Marziali A."/>
            <person name="Militscher J."/>
            <person name="Miranda M."/>
            <person name="Nguyen M."/>
            <person name="Nierman W.C."/>
            <person name="Osborne B.I."/>
            <person name="Pai G."/>
            <person name="Peterson J."/>
            <person name="Pham P.K."/>
            <person name="Rizzo M."/>
            <person name="Rooney T."/>
            <person name="Rowley D."/>
            <person name="Sakano H."/>
            <person name="Salzberg S.L."/>
            <person name="Schwartz J.R."/>
            <person name="Shinn P."/>
            <person name="Southwick A.M."/>
            <person name="Sun H."/>
            <person name="Tallon L.J."/>
            <person name="Tambunga G."/>
            <person name="Toriumi M.J."/>
            <person name="Town C.D."/>
            <person name="Utterback T."/>
            <person name="Van Aken S."/>
            <person name="Vaysberg M."/>
            <person name="Vysotskaia V.S."/>
            <person name="Walker M."/>
            <person name="Wu D."/>
            <person name="Yu G."/>
            <person name="Fraser C.M."/>
            <person name="Venter J.C."/>
            <person name="Davis R.W."/>
        </authorList>
    </citation>
    <scope>NUCLEOTIDE SEQUENCE [LARGE SCALE GENOMIC DNA]</scope>
    <source>
        <strain>cv. Columbia</strain>
    </source>
</reference>
<reference key="5">
    <citation type="journal article" date="2017" name="Plant J.">
        <title>Araport11: a complete reannotation of the Arabidopsis thaliana reference genome.</title>
        <authorList>
            <person name="Cheng C.Y."/>
            <person name="Krishnakumar V."/>
            <person name="Chan A.P."/>
            <person name="Thibaud-Nissen F."/>
            <person name="Schobel S."/>
            <person name="Town C.D."/>
        </authorList>
    </citation>
    <scope>GENOME REANNOTATION</scope>
    <source>
        <strain>cv. Columbia</strain>
    </source>
</reference>
<reference key="6">
    <citation type="submission" date="2002-03" db="EMBL/GenBank/DDBJ databases">
        <title>Full-length cDNA from Arabidopsis thaliana.</title>
        <authorList>
            <person name="Brover V.V."/>
            <person name="Troukhan M.E."/>
            <person name="Alexandrov N.A."/>
            <person name="Lu Y.-P."/>
            <person name="Flavell R.B."/>
            <person name="Feldmann K.A."/>
        </authorList>
    </citation>
    <scope>NUCLEOTIDE SEQUENCE [LARGE SCALE MRNA]</scope>
</reference>
<reference key="7">
    <citation type="journal article" date="2009" name="J. Proteomics">
        <title>Phosphoproteomic analysis of nuclei-enriched fractions from Arabidopsis thaliana.</title>
        <authorList>
            <person name="Jones A.M.E."/>
            <person name="MacLean D."/>
            <person name="Studholme D.J."/>
            <person name="Serna-Sanz A."/>
            <person name="Andreasson E."/>
            <person name="Rathjen J.P."/>
            <person name="Peck S.C."/>
        </authorList>
    </citation>
    <scope>PHOSPHORYLATION [LARGE SCALE ANALYSIS] AT SER-248</scope>
    <scope>IDENTIFICATION BY MASS SPECTROMETRY [LARGE SCALE ANALYSIS]</scope>
    <source>
        <strain>cv. Columbia</strain>
    </source>
</reference>
<reference key="8">
    <citation type="journal article" date="2009" name="Plant Physiol.">
        <title>Large-scale Arabidopsis phosphoproteome profiling reveals novel chloroplast kinase substrates and phosphorylation networks.</title>
        <authorList>
            <person name="Reiland S."/>
            <person name="Messerli G."/>
            <person name="Baerenfaller K."/>
            <person name="Gerrits B."/>
            <person name="Endler A."/>
            <person name="Grossmann J."/>
            <person name="Gruissem W."/>
            <person name="Baginsky S."/>
        </authorList>
    </citation>
    <scope>PHOSPHORYLATION [LARGE SCALE ANALYSIS] AT SER-248</scope>
    <scope>IDENTIFICATION BY MASS SPECTROMETRY [LARGE SCALE ANALYSIS]</scope>
</reference>
<reference key="9">
    <citation type="journal article" date="2012" name="Mol. Cell. Proteomics">
        <title>Comparative large-scale characterisation of plant vs. mammal proteins reveals similar and idiosyncratic N-alpha acetylation features.</title>
        <authorList>
            <person name="Bienvenut W.V."/>
            <person name="Sumpton D."/>
            <person name="Martinez A."/>
            <person name="Lilla S."/>
            <person name="Espagne C."/>
            <person name="Meinnel T."/>
            <person name="Giglione C."/>
        </authorList>
    </citation>
    <scope>ACETYLATION [LARGE SCALE ANALYSIS] AT ALA-2</scope>
    <scope>CLEAVAGE OF INITIATOR METHIONINE [LARGE SCALE ANALYSIS]</scope>
    <scope>IDENTIFICATION BY MASS SPECTROMETRY [LARGE SCALE ANALYSIS]</scope>
</reference>
<reference key="10">
    <citation type="journal article" date="2014" name="Plant J.">
        <title>Light modulated activity of root alkaline/neutral invertase involves the interaction with 14-3-3 proteins.</title>
        <authorList>
            <person name="Gao J."/>
            <person name="van Kleeff P.J."/>
            <person name="Oecking C."/>
            <person name="Li K.W."/>
            <person name="Erban A."/>
            <person name="Kopka J."/>
            <person name="Hincha D.K."/>
            <person name="de Boer A.H."/>
        </authorList>
    </citation>
    <scope>INTERACTION WITH CINV1</scope>
</reference>
<reference key="11">
    <citation type="journal article" date="2015" name="Sci. Rep.">
        <title>Calcium-dependent protein kinases responsible for the phosphorylation of a bZIP transcription factor FD crucial for the florigen complex formation.</title>
        <authorList>
            <person name="Kawamoto N."/>
            <person name="Sasabe M."/>
            <person name="Endo M."/>
            <person name="Machida Y."/>
            <person name="Araki T."/>
        </authorList>
    </citation>
    <scope>INTERACTION WITH FD</scope>
</reference>
<keyword id="KW-0007">Acetylation</keyword>
<keyword id="KW-0025">Alternative splicing</keyword>
<keyword id="KW-0963">Cytoplasm</keyword>
<keyword id="KW-0539">Nucleus</keyword>
<keyword id="KW-0597">Phosphoprotein</keyword>
<keyword id="KW-1185">Reference proteome</keyword>
<name>14334_ARATH</name>
<sequence>MAAPPASSSAREEFVYLAKLAEQAERYEEMVEFMEKVAEAVDKDELTVEERNLLSVAYKNVIGARRASWRIISSIEQKEESRGNDDHVTTIRDYRSKIESELSKICDGILKLLDTRLVPASANGDSKVFYLKMKGDYHRYLAEFKTGQERKDAAEHTLTAYKAAQDIANAELAPTHPIRLGLALNFSVFYYEILNSPDRACNLAKQAFDEAIAELDTLGEESYKDSTLIMQLLRDNLTLWTSDMQDESPEEIKEAAAPKPAEEQKEI</sequence>
<comment type="function">
    <text>Is associated with a DNA binding complex that binds to the G box, a well-characterized cis-acting DNA regulatory element found in plant genes.</text>
</comment>
<comment type="subunit">
    <text evidence="3 4">Interacts with FD (PubMed:25661797). Interacts with CINV1 (PubMed:25256212).</text>
</comment>
<comment type="interaction">
    <interactant intactId="EBI-637479">
        <id>P46077</id>
    </interactant>
    <interactant intactId="EBI-389564">
        <id>Q00403</id>
        <label>GTF2B</label>
    </interactant>
    <organismsDiffer>true</organismsDiffer>
    <experiments>2</experiments>
</comment>
<comment type="subcellular location">
    <subcellularLocation>
        <location evidence="1">Nucleus</location>
    </subcellularLocation>
    <subcellularLocation>
        <location evidence="1">Cytoplasm</location>
    </subcellularLocation>
    <text evidence="1">Translocates from the cytosol to the nucleus when phosphorylated.</text>
</comment>
<comment type="alternative products">
    <event type="alternative splicing"/>
    <isoform>
        <id>P46077-1</id>
        <name>1</name>
        <sequence type="displayed"/>
    </isoform>
    <text>A number of isoforms are produced. According to EST sequences.</text>
</comment>
<comment type="similarity">
    <text evidence="5">Belongs to the 14-3-3 family.</text>
</comment>
<accession>P46077</accession>
<organism>
    <name type="scientific">Arabidopsis thaliana</name>
    <name type="common">Mouse-ear cress</name>
    <dbReference type="NCBI Taxonomy" id="3702"/>
    <lineage>
        <taxon>Eukaryota</taxon>
        <taxon>Viridiplantae</taxon>
        <taxon>Streptophyta</taxon>
        <taxon>Embryophyta</taxon>
        <taxon>Tracheophyta</taxon>
        <taxon>Spermatophyta</taxon>
        <taxon>Magnoliopsida</taxon>
        <taxon>eudicotyledons</taxon>
        <taxon>Gunneridae</taxon>
        <taxon>Pentapetalae</taxon>
        <taxon>rosids</taxon>
        <taxon>malvids</taxon>
        <taxon>Brassicales</taxon>
        <taxon>Brassicaceae</taxon>
        <taxon>Camelineae</taxon>
        <taxon>Arabidopsis</taxon>
    </lineage>
</organism>